<keyword id="KW-0963">Cytoplasm</keyword>
<keyword id="KW-0456">Lyase</keyword>
<keyword id="KW-0670">Pyruvate</keyword>
<keyword id="KW-0831">Ubiquinone biosynthesis</keyword>
<sequence>MKSELTVPLIQLAPWRVPADCELPEALRPWLLEADSMTRRLRHHNRHFSVQLLGNRSVTLCADEQQLVAAEQPMGLCREVILHGDRGPAVLGWTLFAEAALQESGLRELGEQPLGERIFGDEPARRDHLQLACFEIASNPWCPAATVWGRRSRLFLGQWPLLVHELFLPSLSCNKELE</sequence>
<accession>A4STB6</accession>
<reference key="1">
    <citation type="journal article" date="2008" name="BMC Genomics">
        <title>The genome of Aeromonas salmonicida subsp. salmonicida A449: insights into the evolution of a fish pathogen.</title>
        <authorList>
            <person name="Reith M.E."/>
            <person name="Singh R.K."/>
            <person name="Curtis B."/>
            <person name="Boyd J.M."/>
            <person name="Bouevitch A."/>
            <person name="Kimball J."/>
            <person name="Munholland J."/>
            <person name="Murphy C."/>
            <person name="Sarty D."/>
            <person name="Williams J."/>
            <person name="Nash J.H."/>
            <person name="Johnson S.C."/>
            <person name="Brown L.L."/>
        </authorList>
    </citation>
    <scope>NUCLEOTIDE SEQUENCE [LARGE SCALE GENOMIC DNA]</scope>
    <source>
        <strain>A449</strain>
    </source>
</reference>
<name>UBIC_AERS4</name>
<protein>
    <recommendedName>
        <fullName evidence="1">Probable chorismate pyruvate-lyase</fullName>
        <shortName evidence="1">CL</shortName>
        <shortName evidence="1">CPL</shortName>
        <ecNumber evidence="1">4.1.3.40</ecNumber>
    </recommendedName>
</protein>
<comment type="function">
    <text evidence="1">Removes the pyruvyl group from chorismate, with concomitant aromatization of the ring, to provide 4-hydroxybenzoate (4HB) for the ubiquinone pathway.</text>
</comment>
<comment type="catalytic activity">
    <reaction evidence="1">
        <text>chorismate = 4-hydroxybenzoate + pyruvate</text>
        <dbReference type="Rhea" id="RHEA:16505"/>
        <dbReference type="ChEBI" id="CHEBI:15361"/>
        <dbReference type="ChEBI" id="CHEBI:17879"/>
        <dbReference type="ChEBI" id="CHEBI:29748"/>
        <dbReference type="EC" id="4.1.3.40"/>
    </reaction>
</comment>
<comment type="pathway">
    <text evidence="1">Cofactor biosynthesis; ubiquinone biosynthesis.</text>
</comment>
<comment type="subcellular location">
    <subcellularLocation>
        <location evidence="1">Cytoplasm</location>
    </subcellularLocation>
</comment>
<comment type="similarity">
    <text evidence="1">Belongs to the UbiC family.</text>
</comment>
<gene>
    <name evidence="1" type="primary">ubiC</name>
    <name type="ordered locus">ASA_4209</name>
</gene>
<evidence type="ECO:0000255" key="1">
    <source>
        <dbReference type="HAMAP-Rule" id="MF_01632"/>
    </source>
</evidence>
<proteinExistence type="inferred from homology"/>
<dbReference type="EC" id="4.1.3.40" evidence="1"/>
<dbReference type="EMBL" id="CP000644">
    <property type="protein sequence ID" value="ABO92138.1"/>
    <property type="molecule type" value="Genomic_DNA"/>
</dbReference>
<dbReference type="RefSeq" id="WP_011899230.1">
    <property type="nucleotide sequence ID" value="NC_009348.1"/>
</dbReference>
<dbReference type="SMR" id="A4STB6"/>
<dbReference type="STRING" id="29491.GCA_000820065_04467"/>
<dbReference type="KEGG" id="asa:ASA_4209"/>
<dbReference type="eggNOG" id="COG3161">
    <property type="taxonomic scope" value="Bacteria"/>
</dbReference>
<dbReference type="HOGENOM" id="CLU_096824_2_0_6"/>
<dbReference type="UniPathway" id="UPA00232"/>
<dbReference type="Proteomes" id="UP000000225">
    <property type="component" value="Chromosome"/>
</dbReference>
<dbReference type="GO" id="GO:0005829">
    <property type="term" value="C:cytosol"/>
    <property type="evidence" value="ECO:0007669"/>
    <property type="project" value="TreeGrafter"/>
</dbReference>
<dbReference type="GO" id="GO:0008813">
    <property type="term" value="F:chorismate lyase activity"/>
    <property type="evidence" value="ECO:0007669"/>
    <property type="project" value="UniProtKB-UniRule"/>
</dbReference>
<dbReference type="GO" id="GO:0042866">
    <property type="term" value="P:pyruvate biosynthetic process"/>
    <property type="evidence" value="ECO:0007669"/>
    <property type="project" value="UniProtKB-UniRule"/>
</dbReference>
<dbReference type="GO" id="GO:0006744">
    <property type="term" value="P:ubiquinone biosynthetic process"/>
    <property type="evidence" value="ECO:0007669"/>
    <property type="project" value="UniProtKB-UniRule"/>
</dbReference>
<dbReference type="Gene3D" id="3.40.1410.10">
    <property type="entry name" value="Chorismate lyase-like"/>
    <property type="match status" value="1"/>
</dbReference>
<dbReference type="HAMAP" id="MF_01632">
    <property type="entry name" value="UbiC"/>
    <property type="match status" value="1"/>
</dbReference>
<dbReference type="InterPro" id="IPR007440">
    <property type="entry name" value="Chorismate--pyruvate_lyase"/>
</dbReference>
<dbReference type="InterPro" id="IPR028978">
    <property type="entry name" value="Chorismate_lyase_/UTRA_dom_sf"/>
</dbReference>
<dbReference type="PANTHER" id="PTHR38683">
    <property type="entry name" value="CHORISMATE PYRUVATE-LYASE"/>
    <property type="match status" value="1"/>
</dbReference>
<dbReference type="PANTHER" id="PTHR38683:SF1">
    <property type="entry name" value="CHORISMATE PYRUVATE-LYASE"/>
    <property type="match status" value="1"/>
</dbReference>
<dbReference type="Pfam" id="PF04345">
    <property type="entry name" value="Chor_lyase"/>
    <property type="match status" value="1"/>
</dbReference>
<dbReference type="SUPFAM" id="SSF64288">
    <property type="entry name" value="Chorismate lyase-like"/>
    <property type="match status" value="1"/>
</dbReference>
<feature type="chain" id="PRO_0000292060" description="Probable chorismate pyruvate-lyase">
    <location>
        <begin position="1"/>
        <end position="178"/>
    </location>
</feature>
<feature type="binding site" evidence="1">
    <location>
        <position position="37"/>
    </location>
    <ligand>
        <name>substrate</name>
    </ligand>
</feature>
<feature type="binding site" evidence="1">
    <location>
        <position position="78"/>
    </location>
    <ligand>
        <name>substrate</name>
    </ligand>
</feature>
<feature type="binding site" evidence="1">
    <location>
        <position position="114"/>
    </location>
    <ligand>
        <name>substrate</name>
    </ligand>
</feature>
<feature type="binding site" evidence="1">
    <location>
        <position position="165"/>
    </location>
    <ligand>
        <name>substrate</name>
    </ligand>
</feature>
<organism>
    <name type="scientific">Aeromonas salmonicida (strain A449)</name>
    <dbReference type="NCBI Taxonomy" id="382245"/>
    <lineage>
        <taxon>Bacteria</taxon>
        <taxon>Pseudomonadati</taxon>
        <taxon>Pseudomonadota</taxon>
        <taxon>Gammaproteobacteria</taxon>
        <taxon>Aeromonadales</taxon>
        <taxon>Aeromonadaceae</taxon>
        <taxon>Aeromonas</taxon>
    </lineage>
</organism>